<proteinExistence type="evidence at protein level"/>
<protein>
    <recommendedName>
        <fullName evidence="15">CLIP domain-containing serine protease HP8</fullName>
        <ecNumber evidence="6 9">3.4.21.-</ecNumber>
    </recommendedName>
    <alternativeName>
        <fullName evidence="12">BzArgOEtase</fullName>
        <shortName evidence="10">BAEEase</shortName>
    </alternativeName>
    <alternativeName>
        <fullName evidence="11">Hemolymph proteinase 8</fullName>
        <shortName evidence="11">HP8</shortName>
    </alternativeName>
    <component>
        <recommendedName>
            <fullName evidence="13">CLIP domain-containing serine protease HP8 light chain</fullName>
        </recommendedName>
    </component>
    <component>
        <recommendedName>
            <fullName evidence="13">CLIP domain-containing serine protease HP8 heavy chain</fullName>
        </recommendedName>
    </component>
</protein>
<organism evidence="17">
    <name type="scientific">Bombyx mori</name>
    <name type="common">Silk moth</name>
    <dbReference type="NCBI Taxonomy" id="7091"/>
    <lineage>
        <taxon>Eukaryota</taxon>
        <taxon>Metazoa</taxon>
        <taxon>Ecdysozoa</taxon>
        <taxon>Arthropoda</taxon>
        <taxon>Hexapoda</taxon>
        <taxon>Insecta</taxon>
        <taxon>Pterygota</taxon>
        <taxon>Neoptera</taxon>
        <taxon>Endopterygota</taxon>
        <taxon>Lepidoptera</taxon>
        <taxon>Glossata</taxon>
        <taxon>Ditrysia</taxon>
        <taxon>Bombycoidea</taxon>
        <taxon>Bombycidae</taxon>
        <taxon>Bombycinae</taxon>
        <taxon>Bombyx</taxon>
    </lineage>
</organism>
<keyword id="KW-0106">Calcium</keyword>
<keyword id="KW-0165">Cleavage on pair of basic residues</keyword>
<keyword id="KW-0963">Cytoplasm</keyword>
<keyword id="KW-0903">Direct protein sequencing</keyword>
<keyword id="KW-1015">Disulfide bond</keyword>
<keyword id="KW-0325">Glycoprotein</keyword>
<keyword id="KW-0378">Hydrolase</keyword>
<keyword id="KW-0479">Metal-binding</keyword>
<keyword id="KW-0645">Protease</keyword>
<keyword id="KW-1185">Reference proteome</keyword>
<keyword id="KW-0964">Secreted</keyword>
<keyword id="KW-0720">Serine protease</keyword>
<keyword id="KW-0732">Signal</keyword>
<keyword id="KW-0865">Zymogen</keyword>
<reference evidence="18" key="1">
    <citation type="journal article" date="2006" name="Dev. Cell">
        <title>A Spatzle-processing enzyme required for toll signaling activation in Drosophila innate immunity.</title>
        <authorList>
            <person name="Jang I.H."/>
            <person name="Chosa N."/>
            <person name="Kim S.H."/>
            <person name="Nam H.J."/>
            <person name="Lemaitre B."/>
            <person name="Ochiai M."/>
            <person name="Kambris Z."/>
            <person name="Brun S."/>
            <person name="Hashimoto C."/>
            <person name="Ashida M."/>
            <person name="Brey P.T."/>
            <person name="Lee W.J."/>
        </authorList>
    </citation>
    <scope>NUCLEOTIDE SEQUENCE [MRNA]</scope>
    <scope>PROTEIN SEQUENCE OF 25-28; 84-87 AND 113-116</scope>
    <scope>FUNCTION</scope>
    <scope>SUBUNIT</scope>
    <scope>CATALYTIC ACTIVITY</scope>
    <scope>PROTEOLYTIC CLEAVAGE</scope>
    <scope>SUBCELLULAR LOCATION</scope>
    <scope>TISSUE SPECIFICITY</scope>
    <source>
        <strain evidence="18">Kinshu X Showa</strain>
        <tissue evidence="18">Fat body</tissue>
    </source>
</reference>
<reference evidence="16" key="2">
    <citation type="submission" date="2001-11" db="EMBL/GenBank/DDBJ databases">
        <title>Hemolymph prophenoloxidase activating factor from Bombyx mori.</title>
        <authorList>
            <person name="Park D.-S."/>
            <person name="Park H.-Y."/>
        </authorList>
    </citation>
    <scope>NUCLEOTIDE SEQUENCE [MRNA]</scope>
</reference>
<reference evidence="17" key="3">
    <citation type="submission" date="2005-08" db="EMBL/GenBank/DDBJ databases">
        <title>Isolation and characterization of pro-BAEEase from Bombyx mori.</title>
        <authorList>
            <person name="Chosa N."/>
            <person name="Jang I."/>
            <person name="Lee W."/>
            <person name="Ashida M."/>
        </authorList>
    </citation>
    <scope>NUCLEOTIDE SEQUENCE [MRNA]</scope>
</reference>
<reference key="4">
    <citation type="journal article" date="2008" name="Insect Biochem. Mol. Biol.">
        <title>The genome of a lepidopteran model insect, the silkworm Bombyx mori.</title>
        <authorList>
            <consortium name="International Silkworm Genome Consortium"/>
        </authorList>
    </citation>
    <scope>NUCLEOTIDE SEQUENCE [LARGE SCALE GENOMIC DNA]</scope>
    <source>
        <strain>p50T</strain>
    </source>
</reference>
<reference evidence="13" key="5">
    <citation type="journal article" date="1995" name="Eur. J. Biochem.">
        <title>A serine protease zymogen in insect plasma. Purification and activation by microbial cell wall components.</title>
        <authorList>
            <person name="Katsumi Y."/>
            <person name="Kihara H."/>
            <person name="Ochiai M."/>
            <person name="Ashida M."/>
        </authorList>
    </citation>
    <scope>FUNCTION</scope>
    <scope>CATALYTIC ACTIVITY</scope>
    <scope>ACTIVITY REGULATION</scope>
    <scope>SUBCELLULAR LOCATION</scope>
    <scope>TISSUE SPECIFICITY</scope>
</reference>
<reference key="6">
    <citation type="journal article" date="2016" name="Insect Biochem. Mol. Biol.">
        <title>Mechanisms of nodule-specific melanization in the hemocoel of the silkworm, Bombyx mori.</title>
        <authorList>
            <person name="Shu M."/>
            <person name="Mang D."/>
            <person name="Fu G.S."/>
            <person name="Tanaka S."/>
            <person name="Endo H."/>
            <person name="Kikuta S."/>
            <person name="Sato R."/>
        </authorList>
    </citation>
    <scope>NOMENCLATURE</scope>
    <scope>FUNCTION</scope>
    <scope>SUBCELLULAR LOCATION</scope>
    <scope>TISSUE SPECIFICITY</scope>
    <scope>INDUCTION BY BACTERIA AND FUNGI</scope>
</reference>
<reference key="7">
    <citation type="journal article" date="2021" name="J. Insect Physiol.">
        <title>A humoral factor, hemolymph proteinase 8, elicits a cellular defense response of nodule formation in Bombyx mori larvae in association with recognition by C-type lectins.</title>
        <authorList>
            <person name="Tokunaga K."/>
            <person name="Tezuka M."/>
            <person name="Tang S."/>
            <person name="Shu M."/>
            <person name="Yamagishi T."/>
            <person name="Sato R."/>
        </authorList>
    </citation>
    <scope>FUNCTION</scope>
</reference>
<accession>Q2VG86</accession>
<accession>H9J6N1</accession>
<accession>Q8I924</accession>
<dbReference type="EC" id="3.4.21.-" evidence="6 9"/>
<dbReference type="EMBL" id="AB035418">
    <property type="protein sequence ID" value="BAE73254.1"/>
    <property type="molecule type" value="mRNA"/>
</dbReference>
<dbReference type="EMBL" id="AY061936">
    <property type="protein sequence ID" value="AAL31707.1"/>
    <property type="status" value="ALT_FRAME"/>
    <property type="molecule type" value="mRNA"/>
</dbReference>
<dbReference type="EMBL" id="DQ157441">
    <property type="protein sequence ID" value="ABB58762.1"/>
    <property type="molecule type" value="mRNA"/>
</dbReference>
<dbReference type="EMBL" id="BABH01019990">
    <property type="status" value="NOT_ANNOTATED_CDS"/>
    <property type="molecule type" value="Genomic_DNA"/>
</dbReference>
<dbReference type="RefSeq" id="NP_001036844.1">
    <property type="nucleotide sequence ID" value="NM_001043379.1"/>
</dbReference>
<dbReference type="SMR" id="Q2VG86"/>
<dbReference type="FunCoup" id="Q2VG86">
    <property type="interactions" value="13"/>
</dbReference>
<dbReference type="STRING" id="7091.Q2VG86"/>
<dbReference type="MEROPS" id="S01.507"/>
<dbReference type="PaxDb" id="7091-BGIBMGA005173-TA"/>
<dbReference type="EnsemblMetazoa" id="NM_001043379.1">
    <property type="protein sequence ID" value="NP_001036844.1"/>
    <property type="gene ID" value="GeneID_692384"/>
</dbReference>
<dbReference type="GeneID" id="692384"/>
<dbReference type="KEGG" id="bmor:692384"/>
<dbReference type="CTD" id="692384"/>
<dbReference type="eggNOG" id="KOG3627">
    <property type="taxonomic scope" value="Eukaryota"/>
</dbReference>
<dbReference type="HOGENOM" id="CLU_006842_0_3_1"/>
<dbReference type="InParanoid" id="Q2VG86"/>
<dbReference type="Proteomes" id="UP000005204">
    <property type="component" value="Unassembled WGS sequence"/>
</dbReference>
<dbReference type="GO" id="GO:0005737">
    <property type="term" value="C:cytoplasm"/>
    <property type="evidence" value="ECO:0007669"/>
    <property type="project" value="UniProtKB-SubCell"/>
</dbReference>
<dbReference type="GO" id="GO:0005576">
    <property type="term" value="C:extracellular region"/>
    <property type="evidence" value="ECO:0007669"/>
    <property type="project" value="UniProtKB-SubCell"/>
</dbReference>
<dbReference type="GO" id="GO:0004175">
    <property type="term" value="F:endopeptidase activity"/>
    <property type="evidence" value="ECO:0000314"/>
    <property type="project" value="UniProtKB"/>
</dbReference>
<dbReference type="GO" id="GO:0046872">
    <property type="term" value="F:metal ion binding"/>
    <property type="evidence" value="ECO:0007669"/>
    <property type="project" value="UniProtKB-KW"/>
</dbReference>
<dbReference type="GO" id="GO:0004252">
    <property type="term" value="F:serine-type endopeptidase activity"/>
    <property type="evidence" value="ECO:0007669"/>
    <property type="project" value="InterPro"/>
</dbReference>
<dbReference type="GO" id="GO:0006508">
    <property type="term" value="P:proteolysis"/>
    <property type="evidence" value="ECO:0007669"/>
    <property type="project" value="UniProtKB-KW"/>
</dbReference>
<dbReference type="CDD" id="cd00190">
    <property type="entry name" value="Tryp_SPc"/>
    <property type="match status" value="1"/>
</dbReference>
<dbReference type="FunFam" id="2.40.10.10:FF:000028">
    <property type="entry name" value="Serine protease easter"/>
    <property type="match status" value="1"/>
</dbReference>
<dbReference type="FunFam" id="2.40.10.10:FF:000084">
    <property type="entry name" value="Serine protease easter"/>
    <property type="match status" value="1"/>
</dbReference>
<dbReference type="Gene3D" id="3.30.1640.30">
    <property type="match status" value="1"/>
</dbReference>
<dbReference type="Gene3D" id="2.40.10.10">
    <property type="entry name" value="Trypsin-like serine proteases"/>
    <property type="match status" value="2"/>
</dbReference>
<dbReference type="InterPro" id="IPR022700">
    <property type="entry name" value="CLIP"/>
</dbReference>
<dbReference type="InterPro" id="IPR038565">
    <property type="entry name" value="CLIP_sf"/>
</dbReference>
<dbReference type="InterPro" id="IPR009003">
    <property type="entry name" value="Peptidase_S1_PA"/>
</dbReference>
<dbReference type="InterPro" id="IPR043504">
    <property type="entry name" value="Peptidase_S1_PA_chymotrypsin"/>
</dbReference>
<dbReference type="InterPro" id="IPR001314">
    <property type="entry name" value="Peptidase_S1A"/>
</dbReference>
<dbReference type="InterPro" id="IPR051487">
    <property type="entry name" value="Ser/Thr_Proteases_Immune/Dev"/>
</dbReference>
<dbReference type="InterPro" id="IPR001254">
    <property type="entry name" value="Trypsin_dom"/>
</dbReference>
<dbReference type="InterPro" id="IPR018114">
    <property type="entry name" value="TRYPSIN_HIS"/>
</dbReference>
<dbReference type="InterPro" id="IPR033116">
    <property type="entry name" value="TRYPSIN_SER"/>
</dbReference>
<dbReference type="PANTHER" id="PTHR24256">
    <property type="entry name" value="TRYPTASE-RELATED"/>
    <property type="match status" value="1"/>
</dbReference>
<dbReference type="Pfam" id="PF12032">
    <property type="entry name" value="CLIP"/>
    <property type="match status" value="1"/>
</dbReference>
<dbReference type="Pfam" id="PF00089">
    <property type="entry name" value="Trypsin"/>
    <property type="match status" value="1"/>
</dbReference>
<dbReference type="PRINTS" id="PR00722">
    <property type="entry name" value="CHYMOTRYPSIN"/>
</dbReference>
<dbReference type="SMART" id="SM00020">
    <property type="entry name" value="Tryp_SPc"/>
    <property type="match status" value="1"/>
</dbReference>
<dbReference type="SUPFAM" id="SSF50494">
    <property type="entry name" value="Trypsin-like serine proteases"/>
    <property type="match status" value="1"/>
</dbReference>
<dbReference type="PROSITE" id="PS51888">
    <property type="entry name" value="CLIP"/>
    <property type="match status" value="1"/>
</dbReference>
<dbReference type="PROSITE" id="PS50240">
    <property type="entry name" value="TRYPSIN_DOM"/>
    <property type="match status" value="1"/>
</dbReference>
<dbReference type="PROSITE" id="PS00134">
    <property type="entry name" value="TRYPSIN_HIS"/>
    <property type="match status" value="1"/>
</dbReference>
<dbReference type="PROSITE" id="PS00135">
    <property type="entry name" value="TRYPSIN_SER"/>
    <property type="match status" value="1"/>
</dbReference>
<name>HP8_BOMMO</name>
<comment type="function">
    <text evidence="6 7 8 9">Endopeptidase with selective post-Arg cleavage site (PubMed:16399077, PubMed:7737188). Functions in the innate immune response to fungal and Gram-positive bacterial infections (PubMed:16399077, PubMed:26707571, PubMed:34022191). Upon pathogen infection promotes nodulation; a cellular defense response in which hemocytes surround and isolate invading pathogens forming aggregates called nodules (PubMed:26707571, PubMed:34022191). Involved in activating nodule formation in response to infection with M.luteus, E.coli or S.cerevisiae (PubMed:34022191). Able to bind the microbes M.luteus, E.coli or S.cerevisiae (PubMed:34022191). According to another report, does not bind microorganisms (PubMed:26707571).</text>
</comment>
<comment type="activity regulation">
    <text evidence="9">Inhibited by (p-amidinophenyl) methanesulfonyl fluoride, p-nitrophenyl-p'-guanidinobenzoate, D-phenylalanyl-L-prolyl-L-arginyl chloromethane, leupeptin, antipain and to a lesser extent by antithrombin III.</text>
</comment>
<comment type="subunit">
    <text evidence="14">In the active form, heterodimer of a light chain and a heavy chain; disulfide-linked.</text>
</comment>
<comment type="subcellular location">
    <subcellularLocation>
        <location evidence="6 7 9">Secreted</location>
    </subcellularLocation>
    <subcellularLocation>
        <location evidence="7">Cytoplasm</location>
    </subcellularLocation>
    <text evidence="6 7 9">In larvae, secreted in the hemolymph (PubMed:16399077, PubMed:26707571, PubMed:7737188). Only the uncleaved form is detected in hemolymph (PubMed:26707571). Uncleaved (42 kDa) and cleaved (29 kDa) forms, are weakly expressed in hemocytes (PubMed:26707571). Detected in the cytoplasm of various hemocytes including plasmatocytes, oenocytoids, granulocytes and prohemocytes (PubMed:26707571). Cleaved and uncleaved forms also localize to immune defense nodules that have been induced by injection with E.coli, M.luteus or S.cerevisiae cells (PubMed:26707571).</text>
</comment>
<comment type="tissue specificity">
    <text evidence="7">In larvae, expressed in the fat body and hemocytes.</text>
</comment>
<comment type="induction">
    <text evidence="7">Up-regulated in plasma in response to infection with S.cerevisiae and M.luteus.</text>
</comment>
<comment type="domain">
    <text evidence="5">The clip domain consists of 35-55 residues which are 'knitted' together usually by 3 conserved disulfide bonds forming a clip-like compact structure.</text>
</comment>
<comment type="PTM">
    <text evidence="6 14">Proteolytically cleaved for activation (PubMed:16399077). Cleavage produces a light chain and a catalytic heavy chain which remains covalently associated probably through an interchain disulfide bond (Probable).</text>
</comment>
<comment type="similarity">
    <text evidence="5">Belongs to the peptidase S1 family. CLIP subfamily.</text>
</comment>
<comment type="caution">
    <text evidence="6">The light chain lacks the CLIP domain which is different from other CLIP protease family members. This is due to a cleavage at position 83 which is seen in vitro but whose physiological relevance is unclear.</text>
</comment>
<comment type="sequence caution" evidence="13">
    <conflict type="frameshift">
        <sequence resource="EMBL-CDS" id="AAL31707"/>
    </conflict>
</comment>
<comment type="sequence caution" evidence="13">
    <conflict type="erroneous gene model prediction">
        <sequence resource="EMBL" id="BABH01019990"/>
    </conflict>
</comment>
<evidence type="ECO:0000250" key="1">
    <source>
        <dbReference type="UniProtKB" id="O97366"/>
    </source>
</evidence>
<evidence type="ECO:0000250" key="2">
    <source>
        <dbReference type="UniProtKB" id="Q9VB68"/>
    </source>
</evidence>
<evidence type="ECO:0000255" key="3">
    <source>
        <dbReference type="PROSITE-ProRule" id="PRU00274"/>
    </source>
</evidence>
<evidence type="ECO:0000255" key="4">
    <source>
        <dbReference type="PROSITE-ProRule" id="PRU00498"/>
    </source>
</evidence>
<evidence type="ECO:0000255" key="5">
    <source>
        <dbReference type="PROSITE-ProRule" id="PRU01236"/>
    </source>
</evidence>
<evidence type="ECO:0000269" key="6">
    <source>
    </source>
</evidence>
<evidence type="ECO:0000269" key="7">
    <source>
    </source>
</evidence>
<evidence type="ECO:0000269" key="8">
    <source>
    </source>
</evidence>
<evidence type="ECO:0000269" key="9">
    <source>
    </source>
</evidence>
<evidence type="ECO:0000303" key="10">
    <source>
    </source>
</evidence>
<evidence type="ECO:0000303" key="11">
    <source>
    </source>
</evidence>
<evidence type="ECO:0000303" key="12">
    <source>
    </source>
</evidence>
<evidence type="ECO:0000305" key="13"/>
<evidence type="ECO:0000305" key="14">
    <source>
    </source>
</evidence>
<evidence type="ECO:0000305" key="15">
    <source>
    </source>
</evidence>
<evidence type="ECO:0000312" key="16">
    <source>
        <dbReference type="EMBL" id="AAL31707.1"/>
    </source>
</evidence>
<evidence type="ECO:0000312" key="17">
    <source>
        <dbReference type="EMBL" id="ABB58762.1"/>
    </source>
</evidence>
<evidence type="ECO:0000312" key="18">
    <source>
        <dbReference type="EMBL" id="BAE73254.1"/>
    </source>
</evidence>
<sequence length="369" mass="40744">MKTPFEKIRIISCILVIVSTNVVGQKCNGGANCIPLEECTDLFQQLKQGNSPQLTRLLRGLHCGFEDLNSPKICCPPEFLARRSAFSSAGTNSNPTSILPNEKVCGIQNNDRIFGGIQTEIDEHPWMALLRYDKPLGWGFYCGGVLIAPMYVLTAAHCVKGSDLPSSWQLSQVRLGEWNTSTETDCVEGDCSGPVQDIPVQQIIAHENYDPNDKDQQNDIALLRLSRNAQFNDFVSPICLPTSNELRQNEFESDYMEVAGWGKTETRSESDVKLKVRVPIVNREECANVYSNVDRRVTNKQICAGGLAGRDSCRGDSGGALMGQSPKANNWYVFGVVSYGPSPCGTEGWPGVYTRVGSFMDWILSKLEQ</sequence>
<feature type="signal peptide" evidence="6">
    <location>
        <begin position="1"/>
        <end position="24"/>
    </location>
</feature>
<feature type="propeptide" id="PRO_0000443325" evidence="13">
    <location>
        <begin position="25"/>
        <end position="81"/>
    </location>
</feature>
<feature type="chain" id="PRO_0000443326" description="CLIP domain-containing serine protease HP8 light chain" evidence="14">
    <location>
        <begin position="84"/>
        <end position="112"/>
    </location>
</feature>
<feature type="chain" id="PRO_0000443327" description="CLIP domain-containing serine protease HP8 heavy chain" evidence="14">
    <location>
        <begin position="113"/>
        <end position="369"/>
    </location>
</feature>
<feature type="domain" description="Clip" evidence="5">
    <location>
        <begin position="26"/>
        <end position="75"/>
    </location>
</feature>
<feature type="domain" description="Peptidase S1" evidence="3">
    <location>
        <begin position="113"/>
        <end position="368"/>
    </location>
</feature>
<feature type="active site" description="Charge relay system" evidence="3">
    <location>
        <position position="157"/>
    </location>
</feature>
<feature type="active site" description="Charge relay system" evidence="3">
    <location>
        <position position="219"/>
    </location>
</feature>
<feature type="active site" description="Charge relay system" evidence="3">
    <location>
        <position position="317"/>
    </location>
</feature>
<feature type="binding site" evidence="2">
    <location>
        <position position="177"/>
    </location>
    <ligand>
        <name>Ca(2+)</name>
        <dbReference type="ChEBI" id="CHEBI:29108"/>
    </ligand>
</feature>
<feature type="binding site" evidence="1">
    <location>
        <position position="179"/>
    </location>
    <ligand>
        <name>Ca(2+)</name>
        <dbReference type="ChEBI" id="CHEBI:29108"/>
    </ligand>
</feature>
<feature type="binding site" evidence="2">
    <location>
        <position position="182"/>
    </location>
    <ligand>
        <name>Ca(2+)</name>
        <dbReference type="ChEBI" id="CHEBI:29108"/>
    </ligand>
</feature>
<feature type="binding site" evidence="2">
    <location>
        <position position="185"/>
    </location>
    <ligand>
        <name>Ca(2+)</name>
        <dbReference type="ChEBI" id="CHEBI:29108"/>
    </ligand>
</feature>
<feature type="site" description="Cleavage" evidence="6">
    <location>
        <begin position="83"/>
        <end position="84"/>
    </location>
</feature>
<feature type="site" description="Cleavage" evidence="6">
    <location>
        <begin position="112"/>
        <end position="113"/>
    </location>
</feature>
<feature type="glycosylation site" description="N-linked (GlcNAc...) asparagine" evidence="4">
    <location>
        <position position="179"/>
    </location>
</feature>
<feature type="disulfide bond" evidence="5">
    <location>
        <begin position="27"/>
        <end position="74"/>
    </location>
</feature>
<feature type="disulfide bond" evidence="5">
    <location>
        <begin position="33"/>
        <end position="63"/>
    </location>
</feature>
<feature type="disulfide bond" evidence="5">
    <location>
        <begin position="39"/>
        <end position="75"/>
    </location>
</feature>
<feature type="disulfide bond" description="Interchain (between light and heavy chains)" evidence="2">
    <location>
        <begin position="105"/>
        <end position="239"/>
    </location>
</feature>
<feature type="disulfide bond" evidence="3">
    <location>
        <begin position="142"/>
        <end position="158"/>
    </location>
</feature>
<feature type="disulfide bond" evidence="2">
    <location>
        <begin position="186"/>
        <end position="191"/>
    </location>
</feature>
<feature type="disulfide bond" evidence="3">
    <location>
        <begin position="286"/>
        <end position="303"/>
    </location>
</feature>
<feature type="disulfide bond" evidence="3">
    <location>
        <begin position="313"/>
        <end position="344"/>
    </location>
</feature>